<organism>
    <name type="scientific">Balaenoptera musculus</name>
    <name type="common">Blue whale</name>
    <dbReference type="NCBI Taxonomy" id="9771"/>
    <lineage>
        <taxon>Eukaryota</taxon>
        <taxon>Metazoa</taxon>
        <taxon>Chordata</taxon>
        <taxon>Craniata</taxon>
        <taxon>Vertebrata</taxon>
        <taxon>Euteleostomi</taxon>
        <taxon>Mammalia</taxon>
        <taxon>Eutheria</taxon>
        <taxon>Laurasiatheria</taxon>
        <taxon>Artiodactyla</taxon>
        <taxon>Whippomorpha</taxon>
        <taxon>Cetacea</taxon>
        <taxon>Mysticeti</taxon>
        <taxon>Balaenopteridae</taxon>
        <taxon>Balaenoptera</taxon>
    </lineage>
</organism>
<evidence type="ECO:0000250" key="1">
    <source>
        <dbReference type="UniProtKB" id="P03915"/>
    </source>
</evidence>
<evidence type="ECO:0000250" key="2">
    <source>
        <dbReference type="UniProtKB" id="P03920"/>
    </source>
</evidence>
<evidence type="ECO:0000255" key="3"/>
<evidence type="ECO:0000305" key="4"/>
<sequence length="606" mass="68097">MNLFTSFVLLTLLILFTPIMVSNTDPHKNNKYQSYVKNIVFCAFITSLIPAMMYLHTNQETLISNWHWITIQTLKLTLSFKMDYFSLMFMPVALFITWSIMEFSMWYMHSDPYINQFFKYLLLFLITMLILVTANNLFQLFIGWEGVGIMSFLLIGWWFGRTDANTAALQAILYNRIGDIGLLASMAWFLSNMNTWDLQQIFMLNQNPLNFPLMGLVLAAAGKSAQFGLHPWLPSAMEGPTPVSALLHSSTMVVAGIFLLVRFYPLMENNKLIQTVTLCLGAITTLFTAICALTQNDIKKIIAFSTSSQLGLMMVTIGLNQPYLAFLHICTHAFFKAMLFLCSGSIIHNLNNEQDIRKMGGLFKALPFTTTALIIGCLALTGMPFLTGFYSKDPIIEAATSSYTNAWALLLTLTATSLTAVYSTRIIFFALLGQPRFPPSTTINENNPLLINPIKRLLIGSIFAGFILSNSIPPVITPLMTMPLHLKLTALTMTTLGFIIAFEINLDTQNLKYTHPSNPFKFSTLLGYFPTIMHRLPPHLDLSMSQKLATSLLDLTWLETTLPKTTALIQLKASTLTSNQQGLIKLYFLSFLITITLSMILFNCPE</sequence>
<proteinExistence type="inferred from homology"/>
<name>NU5M_BALMU</name>
<reference key="1">
    <citation type="journal article" date="1993" name="J. Mol. Evol.">
        <title>Comparison between the complete mtDNA sequences of the blue and the fin whale, two species that can hybridize in nature.</title>
        <authorList>
            <person name="Arnason U."/>
            <person name="Gullberg A."/>
        </authorList>
    </citation>
    <scope>NUCLEOTIDE SEQUENCE [GENOMIC DNA]</scope>
</reference>
<gene>
    <name type="primary">MT-ND5</name>
    <name type="synonym">MTND5</name>
    <name type="synonym">NADH5</name>
    <name type="synonym">ND5</name>
</gene>
<dbReference type="EC" id="7.1.1.2" evidence="1"/>
<dbReference type="EMBL" id="X72204">
    <property type="protein sequence ID" value="CAA51005.1"/>
    <property type="molecule type" value="Genomic_DNA"/>
</dbReference>
<dbReference type="PIR" id="S41830">
    <property type="entry name" value="S41830"/>
</dbReference>
<dbReference type="RefSeq" id="NP_007066.1">
    <property type="nucleotide sequence ID" value="NC_001601.1"/>
</dbReference>
<dbReference type="SMR" id="P41299"/>
<dbReference type="GeneID" id="807739"/>
<dbReference type="KEGG" id="bmus:807739"/>
<dbReference type="CTD" id="4540"/>
<dbReference type="OrthoDB" id="9683051at2759"/>
<dbReference type="Proteomes" id="UP000694857">
    <property type="component" value="Mitochondrion MT"/>
</dbReference>
<dbReference type="GO" id="GO:0005743">
    <property type="term" value="C:mitochondrial inner membrane"/>
    <property type="evidence" value="ECO:0000250"/>
    <property type="project" value="UniProtKB"/>
</dbReference>
<dbReference type="GO" id="GO:0008137">
    <property type="term" value="F:NADH dehydrogenase (ubiquinone) activity"/>
    <property type="evidence" value="ECO:0000250"/>
    <property type="project" value="UniProtKB"/>
</dbReference>
<dbReference type="GO" id="GO:0015990">
    <property type="term" value="P:electron transport coupled proton transport"/>
    <property type="evidence" value="ECO:0007669"/>
    <property type="project" value="TreeGrafter"/>
</dbReference>
<dbReference type="GO" id="GO:0006120">
    <property type="term" value="P:mitochondrial electron transport, NADH to ubiquinone"/>
    <property type="evidence" value="ECO:0000250"/>
    <property type="project" value="UniProtKB"/>
</dbReference>
<dbReference type="GO" id="GO:0032981">
    <property type="term" value="P:mitochondrial respiratory chain complex I assembly"/>
    <property type="evidence" value="ECO:0000250"/>
    <property type="project" value="UniProtKB"/>
</dbReference>
<dbReference type="InterPro" id="IPR010934">
    <property type="entry name" value="NADH_DH_su5_C"/>
</dbReference>
<dbReference type="InterPro" id="IPR018393">
    <property type="entry name" value="NADHpl_OxRdtase_5_subgr"/>
</dbReference>
<dbReference type="InterPro" id="IPR001750">
    <property type="entry name" value="ND/Mrp_TM"/>
</dbReference>
<dbReference type="InterPro" id="IPR003945">
    <property type="entry name" value="NU5C-like"/>
</dbReference>
<dbReference type="InterPro" id="IPR001516">
    <property type="entry name" value="Proton_antipo_N"/>
</dbReference>
<dbReference type="NCBIfam" id="TIGR01974">
    <property type="entry name" value="NDH_I_L"/>
    <property type="match status" value="1"/>
</dbReference>
<dbReference type="PANTHER" id="PTHR42829">
    <property type="entry name" value="NADH-UBIQUINONE OXIDOREDUCTASE CHAIN 5"/>
    <property type="match status" value="1"/>
</dbReference>
<dbReference type="PANTHER" id="PTHR42829:SF2">
    <property type="entry name" value="NADH-UBIQUINONE OXIDOREDUCTASE CHAIN 5"/>
    <property type="match status" value="1"/>
</dbReference>
<dbReference type="Pfam" id="PF06455">
    <property type="entry name" value="NADH5_C"/>
    <property type="match status" value="1"/>
</dbReference>
<dbReference type="Pfam" id="PF00361">
    <property type="entry name" value="Proton_antipo_M"/>
    <property type="match status" value="1"/>
</dbReference>
<dbReference type="Pfam" id="PF00662">
    <property type="entry name" value="Proton_antipo_N"/>
    <property type="match status" value="1"/>
</dbReference>
<dbReference type="PRINTS" id="PR01434">
    <property type="entry name" value="NADHDHGNASE5"/>
</dbReference>
<feature type="chain" id="PRO_0000118066" description="NADH-ubiquinone oxidoreductase chain 5">
    <location>
        <begin position="1"/>
        <end position="606"/>
    </location>
</feature>
<feature type="transmembrane region" description="Helical" evidence="3">
    <location>
        <begin position="1"/>
        <end position="21"/>
    </location>
</feature>
<feature type="transmembrane region" description="Helical" evidence="3">
    <location>
        <begin position="35"/>
        <end position="55"/>
    </location>
</feature>
<feature type="transmembrane region" description="Helical" evidence="3">
    <location>
        <begin position="87"/>
        <end position="107"/>
    </location>
</feature>
<feature type="transmembrane region" description="Helical" evidence="3">
    <location>
        <begin position="114"/>
        <end position="134"/>
    </location>
</feature>
<feature type="transmembrane region" description="Helical" evidence="3">
    <location>
        <begin position="140"/>
        <end position="160"/>
    </location>
</feature>
<feature type="transmembrane region" description="Helical" evidence="3">
    <location>
        <begin position="171"/>
        <end position="191"/>
    </location>
</feature>
<feature type="transmembrane region" description="Helical" evidence="3">
    <location>
        <begin position="211"/>
        <end position="233"/>
    </location>
</feature>
<feature type="transmembrane region" description="Helical" evidence="3">
    <location>
        <begin position="241"/>
        <end position="261"/>
    </location>
</feature>
<feature type="transmembrane region" description="Helical" evidence="3">
    <location>
        <begin position="272"/>
        <end position="292"/>
    </location>
</feature>
<feature type="transmembrane region" description="Helical" evidence="3">
    <location>
        <begin position="301"/>
        <end position="320"/>
    </location>
</feature>
<feature type="transmembrane region" description="Helical" evidence="3">
    <location>
        <begin position="325"/>
        <end position="347"/>
    </location>
</feature>
<feature type="transmembrane region" description="Helical" evidence="3">
    <location>
        <begin position="366"/>
        <end position="386"/>
    </location>
</feature>
<feature type="transmembrane region" description="Helical" evidence="3">
    <location>
        <begin position="413"/>
        <end position="433"/>
    </location>
</feature>
<feature type="transmembrane region" description="Helical" evidence="3">
    <location>
        <begin position="457"/>
        <end position="477"/>
    </location>
</feature>
<feature type="transmembrane region" description="Helical" evidence="3">
    <location>
        <begin position="482"/>
        <end position="502"/>
    </location>
</feature>
<feature type="transmembrane region" description="Helical" evidence="3">
    <location>
        <begin position="582"/>
        <end position="602"/>
    </location>
</feature>
<geneLocation type="mitochondrion"/>
<comment type="function">
    <text evidence="1">Core subunit of the mitochondrial membrane respiratory chain NADH dehydrogenase (Complex I) which catalyzes electron transfer from NADH through the respiratory chain, using ubiquinone as an electron acceptor. Essential for the catalytic activity and assembly of complex I.</text>
</comment>
<comment type="catalytic activity">
    <reaction evidence="1">
        <text>a ubiquinone + NADH + 5 H(+)(in) = a ubiquinol + NAD(+) + 4 H(+)(out)</text>
        <dbReference type="Rhea" id="RHEA:29091"/>
        <dbReference type="Rhea" id="RHEA-COMP:9565"/>
        <dbReference type="Rhea" id="RHEA-COMP:9566"/>
        <dbReference type="ChEBI" id="CHEBI:15378"/>
        <dbReference type="ChEBI" id="CHEBI:16389"/>
        <dbReference type="ChEBI" id="CHEBI:17976"/>
        <dbReference type="ChEBI" id="CHEBI:57540"/>
        <dbReference type="ChEBI" id="CHEBI:57945"/>
        <dbReference type="EC" id="7.1.1.2"/>
    </reaction>
</comment>
<comment type="subunit">
    <text evidence="2">Core subunit of respiratory chain NADH dehydrogenase (Complex I) which is composed of 45 different subunits.</text>
</comment>
<comment type="subcellular location">
    <subcellularLocation>
        <location evidence="2">Mitochondrion inner membrane</location>
        <topology evidence="3">Multi-pass membrane protein</topology>
    </subcellularLocation>
</comment>
<comment type="similarity">
    <text evidence="4">Belongs to the complex I subunit 5 family.</text>
</comment>
<keyword id="KW-0249">Electron transport</keyword>
<keyword id="KW-0472">Membrane</keyword>
<keyword id="KW-0496">Mitochondrion</keyword>
<keyword id="KW-0999">Mitochondrion inner membrane</keyword>
<keyword id="KW-0520">NAD</keyword>
<keyword id="KW-1185">Reference proteome</keyword>
<keyword id="KW-0679">Respiratory chain</keyword>
<keyword id="KW-1278">Translocase</keyword>
<keyword id="KW-0812">Transmembrane</keyword>
<keyword id="KW-1133">Transmembrane helix</keyword>
<keyword id="KW-0813">Transport</keyword>
<keyword id="KW-0830">Ubiquinone</keyword>
<protein>
    <recommendedName>
        <fullName>NADH-ubiquinone oxidoreductase chain 5</fullName>
        <ecNumber evidence="1">7.1.1.2</ecNumber>
    </recommendedName>
    <alternativeName>
        <fullName>NADH dehydrogenase subunit 5</fullName>
    </alternativeName>
</protein>
<accession>P41299</accession>